<feature type="chain" id="PRO_1000198167" description="Trigger factor">
    <location>
        <begin position="1"/>
        <end position="462"/>
    </location>
</feature>
<feature type="domain" description="PPIase FKBP-type" evidence="1">
    <location>
        <begin position="172"/>
        <end position="257"/>
    </location>
</feature>
<feature type="region of interest" description="Disordered" evidence="2">
    <location>
        <begin position="443"/>
        <end position="462"/>
    </location>
</feature>
<feature type="compositionally biased region" description="Acidic residues" evidence="2">
    <location>
        <begin position="444"/>
        <end position="455"/>
    </location>
</feature>
<gene>
    <name evidence="1" type="primary">tig</name>
    <name type="ordered locus">Msil_2912</name>
</gene>
<evidence type="ECO:0000255" key="1">
    <source>
        <dbReference type="HAMAP-Rule" id="MF_00303"/>
    </source>
</evidence>
<evidence type="ECO:0000256" key="2">
    <source>
        <dbReference type="SAM" id="MobiDB-lite"/>
    </source>
</evidence>
<name>TIG_METSB</name>
<accession>B8EIL1</accession>
<reference key="1">
    <citation type="journal article" date="2010" name="J. Bacteriol.">
        <title>Complete genome sequence of the aerobic facultative methanotroph Methylocella silvestris BL2.</title>
        <authorList>
            <person name="Chen Y."/>
            <person name="Crombie A."/>
            <person name="Rahman M.T."/>
            <person name="Dedysh S.N."/>
            <person name="Liesack W."/>
            <person name="Stott M.B."/>
            <person name="Alam M."/>
            <person name="Theisen A.R."/>
            <person name="Murrell J.C."/>
            <person name="Dunfield P.F."/>
        </authorList>
    </citation>
    <scope>NUCLEOTIDE SEQUENCE [LARGE SCALE GENOMIC DNA]</scope>
    <source>
        <strain>DSM 15510 / CIP 108128 / LMG 27833 / NCIMB 13906 / BL2</strain>
    </source>
</reference>
<keyword id="KW-0131">Cell cycle</keyword>
<keyword id="KW-0132">Cell division</keyword>
<keyword id="KW-0143">Chaperone</keyword>
<keyword id="KW-0963">Cytoplasm</keyword>
<keyword id="KW-0413">Isomerase</keyword>
<keyword id="KW-1185">Reference proteome</keyword>
<keyword id="KW-0697">Rotamase</keyword>
<protein>
    <recommendedName>
        <fullName evidence="1">Trigger factor</fullName>
        <shortName evidence="1">TF</shortName>
        <ecNumber evidence="1">5.2.1.8</ecNumber>
    </recommendedName>
    <alternativeName>
        <fullName evidence="1">PPIase</fullName>
    </alternativeName>
</protein>
<dbReference type="EC" id="5.2.1.8" evidence="1"/>
<dbReference type="EMBL" id="CP001280">
    <property type="protein sequence ID" value="ACK51828.1"/>
    <property type="molecule type" value="Genomic_DNA"/>
</dbReference>
<dbReference type="RefSeq" id="WP_012591897.1">
    <property type="nucleotide sequence ID" value="NC_011666.1"/>
</dbReference>
<dbReference type="SMR" id="B8EIL1"/>
<dbReference type="STRING" id="395965.Msil_2912"/>
<dbReference type="KEGG" id="msl:Msil_2912"/>
<dbReference type="eggNOG" id="COG0544">
    <property type="taxonomic scope" value="Bacteria"/>
</dbReference>
<dbReference type="HOGENOM" id="CLU_033058_2_2_5"/>
<dbReference type="OrthoDB" id="9767721at2"/>
<dbReference type="Proteomes" id="UP000002257">
    <property type="component" value="Chromosome"/>
</dbReference>
<dbReference type="GO" id="GO:0005737">
    <property type="term" value="C:cytoplasm"/>
    <property type="evidence" value="ECO:0007669"/>
    <property type="project" value="UniProtKB-SubCell"/>
</dbReference>
<dbReference type="GO" id="GO:0003755">
    <property type="term" value="F:peptidyl-prolyl cis-trans isomerase activity"/>
    <property type="evidence" value="ECO:0007669"/>
    <property type="project" value="UniProtKB-UniRule"/>
</dbReference>
<dbReference type="GO" id="GO:0044183">
    <property type="term" value="F:protein folding chaperone"/>
    <property type="evidence" value="ECO:0007669"/>
    <property type="project" value="TreeGrafter"/>
</dbReference>
<dbReference type="GO" id="GO:0043022">
    <property type="term" value="F:ribosome binding"/>
    <property type="evidence" value="ECO:0007669"/>
    <property type="project" value="TreeGrafter"/>
</dbReference>
<dbReference type="GO" id="GO:0051083">
    <property type="term" value="P:'de novo' cotranslational protein folding"/>
    <property type="evidence" value="ECO:0007669"/>
    <property type="project" value="TreeGrafter"/>
</dbReference>
<dbReference type="GO" id="GO:0051301">
    <property type="term" value="P:cell division"/>
    <property type="evidence" value="ECO:0007669"/>
    <property type="project" value="UniProtKB-KW"/>
</dbReference>
<dbReference type="GO" id="GO:0061077">
    <property type="term" value="P:chaperone-mediated protein folding"/>
    <property type="evidence" value="ECO:0007669"/>
    <property type="project" value="TreeGrafter"/>
</dbReference>
<dbReference type="GO" id="GO:0015031">
    <property type="term" value="P:protein transport"/>
    <property type="evidence" value="ECO:0007669"/>
    <property type="project" value="UniProtKB-UniRule"/>
</dbReference>
<dbReference type="GO" id="GO:0043335">
    <property type="term" value="P:protein unfolding"/>
    <property type="evidence" value="ECO:0007669"/>
    <property type="project" value="TreeGrafter"/>
</dbReference>
<dbReference type="FunFam" id="3.10.50.40:FF:000001">
    <property type="entry name" value="Trigger factor"/>
    <property type="match status" value="1"/>
</dbReference>
<dbReference type="Gene3D" id="3.10.50.40">
    <property type="match status" value="1"/>
</dbReference>
<dbReference type="Gene3D" id="3.30.70.1050">
    <property type="entry name" value="Trigger factor ribosome-binding domain"/>
    <property type="match status" value="1"/>
</dbReference>
<dbReference type="Gene3D" id="1.10.3120.10">
    <property type="entry name" value="Trigger factor, C-terminal domain"/>
    <property type="match status" value="1"/>
</dbReference>
<dbReference type="HAMAP" id="MF_00303">
    <property type="entry name" value="Trigger_factor_Tig"/>
    <property type="match status" value="1"/>
</dbReference>
<dbReference type="InterPro" id="IPR046357">
    <property type="entry name" value="PPIase_dom_sf"/>
</dbReference>
<dbReference type="InterPro" id="IPR001179">
    <property type="entry name" value="PPIase_FKBP_dom"/>
</dbReference>
<dbReference type="InterPro" id="IPR005215">
    <property type="entry name" value="Trig_fac"/>
</dbReference>
<dbReference type="InterPro" id="IPR008880">
    <property type="entry name" value="Trigger_fac_C"/>
</dbReference>
<dbReference type="InterPro" id="IPR037041">
    <property type="entry name" value="Trigger_fac_C_sf"/>
</dbReference>
<dbReference type="InterPro" id="IPR008881">
    <property type="entry name" value="Trigger_fac_ribosome-bd_bac"/>
</dbReference>
<dbReference type="InterPro" id="IPR036611">
    <property type="entry name" value="Trigger_fac_ribosome-bd_sf"/>
</dbReference>
<dbReference type="InterPro" id="IPR027304">
    <property type="entry name" value="Trigger_fact/SurA_dom_sf"/>
</dbReference>
<dbReference type="NCBIfam" id="TIGR00115">
    <property type="entry name" value="tig"/>
    <property type="match status" value="1"/>
</dbReference>
<dbReference type="PANTHER" id="PTHR30560">
    <property type="entry name" value="TRIGGER FACTOR CHAPERONE AND PEPTIDYL-PROLYL CIS/TRANS ISOMERASE"/>
    <property type="match status" value="1"/>
</dbReference>
<dbReference type="PANTHER" id="PTHR30560:SF3">
    <property type="entry name" value="TRIGGER FACTOR-LIKE PROTEIN TIG, CHLOROPLASTIC"/>
    <property type="match status" value="1"/>
</dbReference>
<dbReference type="Pfam" id="PF00254">
    <property type="entry name" value="FKBP_C"/>
    <property type="match status" value="1"/>
</dbReference>
<dbReference type="Pfam" id="PF05698">
    <property type="entry name" value="Trigger_C"/>
    <property type="match status" value="1"/>
</dbReference>
<dbReference type="Pfam" id="PF05697">
    <property type="entry name" value="Trigger_N"/>
    <property type="match status" value="1"/>
</dbReference>
<dbReference type="PIRSF" id="PIRSF003095">
    <property type="entry name" value="Trigger_factor"/>
    <property type="match status" value="1"/>
</dbReference>
<dbReference type="SUPFAM" id="SSF54534">
    <property type="entry name" value="FKBP-like"/>
    <property type="match status" value="1"/>
</dbReference>
<dbReference type="SUPFAM" id="SSF109998">
    <property type="entry name" value="Triger factor/SurA peptide-binding domain-like"/>
    <property type="match status" value="1"/>
</dbReference>
<dbReference type="SUPFAM" id="SSF102735">
    <property type="entry name" value="Trigger factor ribosome-binding domain"/>
    <property type="match status" value="1"/>
</dbReference>
<dbReference type="PROSITE" id="PS50059">
    <property type="entry name" value="FKBP_PPIASE"/>
    <property type="match status" value="1"/>
</dbReference>
<comment type="function">
    <text evidence="1">Involved in protein export. Acts as a chaperone by maintaining the newly synthesized protein in an open conformation. Functions as a peptidyl-prolyl cis-trans isomerase.</text>
</comment>
<comment type="catalytic activity">
    <reaction evidence="1">
        <text>[protein]-peptidylproline (omega=180) = [protein]-peptidylproline (omega=0)</text>
        <dbReference type="Rhea" id="RHEA:16237"/>
        <dbReference type="Rhea" id="RHEA-COMP:10747"/>
        <dbReference type="Rhea" id="RHEA-COMP:10748"/>
        <dbReference type="ChEBI" id="CHEBI:83833"/>
        <dbReference type="ChEBI" id="CHEBI:83834"/>
        <dbReference type="EC" id="5.2.1.8"/>
    </reaction>
</comment>
<comment type="subcellular location">
    <subcellularLocation>
        <location>Cytoplasm</location>
    </subcellularLocation>
    <text evidence="1">About half TF is bound to the ribosome near the polypeptide exit tunnel while the other half is free in the cytoplasm.</text>
</comment>
<comment type="domain">
    <text evidence="1">Consists of 3 domains; the N-terminus binds the ribosome, the middle domain has PPIase activity, while the C-terminus has intrinsic chaperone activity on its own.</text>
</comment>
<comment type="similarity">
    <text evidence="1">Belongs to the FKBP-type PPIase family. Tig subfamily.</text>
</comment>
<sequence length="462" mass="50645">MQVTETLSQGLKREFQVVLPATDLATRLDSQLAEMRAKARINGFRPGKVPVAHLKRLYGRSIMAEVVQEAVNEAHRKIIEDNALRPASQPKIDFPGEKDELEKAFEAKADFAFTVALEVLPKIEIGSFEGVEIERLVAAVSEDEIDLVVNRLAEQSRPYTPKEGDGVVATKGDKATIDFVGKIDGEAFEGGSGEGVDLVLGSGSFIPGFEEQLEGLKLGDSRTVTVTFPDDYSAAHLAGKEAVFDVTLKALAAPGETVIDDAFAKGYGLEDLTKLRESIKANIERDYAAASRRKWKRALLDALDAKYAFDLPEGLVAQEFDAIWRRVEAEQSQSGRSFADEGTTEEAARADYRKIAERRVRLGLLLADVGDAAGVKVADEEVNQALFERARSFPGQEKMVWDYYQKNPSALAELRAPIYEEKVVDHILSLVKVTDKAVPKEELLAADEEDEEEAAESSAALV</sequence>
<proteinExistence type="inferred from homology"/>
<organism>
    <name type="scientific">Methylocella silvestris (strain DSM 15510 / CIP 108128 / LMG 27833 / NCIMB 13906 / BL2)</name>
    <dbReference type="NCBI Taxonomy" id="395965"/>
    <lineage>
        <taxon>Bacteria</taxon>
        <taxon>Pseudomonadati</taxon>
        <taxon>Pseudomonadota</taxon>
        <taxon>Alphaproteobacteria</taxon>
        <taxon>Hyphomicrobiales</taxon>
        <taxon>Beijerinckiaceae</taxon>
        <taxon>Methylocella</taxon>
    </lineage>
</organism>